<proteinExistence type="inferred from homology"/>
<name>GCSH_LEGPL</name>
<protein>
    <recommendedName>
        <fullName evidence="1">Glycine cleavage system H protein</fullName>
    </recommendedName>
</protein>
<dbReference type="EMBL" id="CR628337">
    <property type="protein sequence ID" value="CAH14346.1"/>
    <property type="molecule type" value="Genomic_DNA"/>
</dbReference>
<dbReference type="RefSeq" id="WP_010945878.1">
    <property type="nucleotide sequence ID" value="NC_006369.1"/>
</dbReference>
<dbReference type="SMR" id="Q5X0A5"/>
<dbReference type="GeneID" id="57034124"/>
<dbReference type="KEGG" id="lpf:lpl0116"/>
<dbReference type="LegioList" id="lpl0116"/>
<dbReference type="HOGENOM" id="CLU_097408_2_0_6"/>
<dbReference type="Proteomes" id="UP000002517">
    <property type="component" value="Chromosome"/>
</dbReference>
<dbReference type="GO" id="GO:0005829">
    <property type="term" value="C:cytosol"/>
    <property type="evidence" value="ECO:0007669"/>
    <property type="project" value="TreeGrafter"/>
</dbReference>
<dbReference type="GO" id="GO:0005960">
    <property type="term" value="C:glycine cleavage complex"/>
    <property type="evidence" value="ECO:0007669"/>
    <property type="project" value="InterPro"/>
</dbReference>
<dbReference type="GO" id="GO:0019464">
    <property type="term" value="P:glycine decarboxylation via glycine cleavage system"/>
    <property type="evidence" value="ECO:0007669"/>
    <property type="project" value="UniProtKB-UniRule"/>
</dbReference>
<dbReference type="CDD" id="cd06848">
    <property type="entry name" value="GCS_H"/>
    <property type="match status" value="1"/>
</dbReference>
<dbReference type="Gene3D" id="2.40.50.100">
    <property type="match status" value="1"/>
</dbReference>
<dbReference type="HAMAP" id="MF_00272">
    <property type="entry name" value="GcvH"/>
    <property type="match status" value="1"/>
</dbReference>
<dbReference type="InterPro" id="IPR003016">
    <property type="entry name" value="2-oxoA_DH_lipoyl-BS"/>
</dbReference>
<dbReference type="InterPro" id="IPR000089">
    <property type="entry name" value="Biotin_lipoyl"/>
</dbReference>
<dbReference type="InterPro" id="IPR002930">
    <property type="entry name" value="GCV_H"/>
</dbReference>
<dbReference type="InterPro" id="IPR033753">
    <property type="entry name" value="GCV_H/Fam206"/>
</dbReference>
<dbReference type="InterPro" id="IPR017453">
    <property type="entry name" value="GCV_H_sub"/>
</dbReference>
<dbReference type="InterPro" id="IPR011053">
    <property type="entry name" value="Single_hybrid_motif"/>
</dbReference>
<dbReference type="NCBIfam" id="TIGR00527">
    <property type="entry name" value="gcvH"/>
    <property type="match status" value="1"/>
</dbReference>
<dbReference type="NCBIfam" id="NF002270">
    <property type="entry name" value="PRK01202.1"/>
    <property type="match status" value="1"/>
</dbReference>
<dbReference type="PANTHER" id="PTHR11715">
    <property type="entry name" value="GLYCINE CLEAVAGE SYSTEM H PROTEIN"/>
    <property type="match status" value="1"/>
</dbReference>
<dbReference type="PANTHER" id="PTHR11715:SF3">
    <property type="entry name" value="GLYCINE CLEAVAGE SYSTEM H PROTEIN-RELATED"/>
    <property type="match status" value="1"/>
</dbReference>
<dbReference type="Pfam" id="PF01597">
    <property type="entry name" value="GCV_H"/>
    <property type="match status" value="1"/>
</dbReference>
<dbReference type="SUPFAM" id="SSF51230">
    <property type="entry name" value="Single hybrid motif"/>
    <property type="match status" value="1"/>
</dbReference>
<dbReference type="PROSITE" id="PS50968">
    <property type="entry name" value="BIOTINYL_LIPOYL"/>
    <property type="match status" value="1"/>
</dbReference>
<dbReference type="PROSITE" id="PS00189">
    <property type="entry name" value="LIPOYL"/>
    <property type="match status" value="1"/>
</dbReference>
<reference key="1">
    <citation type="journal article" date="2004" name="Nat. Genet.">
        <title>Evidence in the Legionella pneumophila genome for exploitation of host cell functions and high genome plasticity.</title>
        <authorList>
            <person name="Cazalet C."/>
            <person name="Rusniok C."/>
            <person name="Brueggemann H."/>
            <person name="Zidane N."/>
            <person name="Magnier A."/>
            <person name="Ma L."/>
            <person name="Tichit M."/>
            <person name="Jarraud S."/>
            <person name="Bouchier C."/>
            <person name="Vandenesch F."/>
            <person name="Kunst F."/>
            <person name="Etienne J."/>
            <person name="Glaser P."/>
            <person name="Buchrieser C."/>
        </authorList>
    </citation>
    <scope>NUCLEOTIDE SEQUENCE [LARGE SCALE GENOMIC DNA]</scope>
    <source>
        <strain>Lens</strain>
    </source>
</reference>
<evidence type="ECO:0000255" key="1">
    <source>
        <dbReference type="HAMAP-Rule" id="MF_00272"/>
    </source>
</evidence>
<evidence type="ECO:0000255" key="2">
    <source>
        <dbReference type="PROSITE-ProRule" id="PRU01066"/>
    </source>
</evidence>
<gene>
    <name evidence="1" type="primary">gcvH</name>
    <name type="ordered locus">lpl0116</name>
</gene>
<organism>
    <name type="scientific">Legionella pneumophila (strain Lens)</name>
    <dbReference type="NCBI Taxonomy" id="297245"/>
    <lineage>
        <taxon>Bacteria</taxon>
        <taxon>Pseudomonadati</taxon>
        <taxon>Pseudomonadota</taxon>
        <taxon>Gammaproteobacteria</taxon>
        <taxon>Legionellales</taxon>
        <taxon>Legionellaceae</taxon>
        <taxon>Legionella</taxon>
    </lineage>
</organism>
<comment type="function">
    <text evidence="1">The glycine cleavage system catalyzes the degradation of glycine. The H protein shuttles the methylamine group of glycine from the P protein to the T protein.</text>
</comment>
<comment type="cofactor">
    <cofactor evidence="1">
        <name>(R)-lipoate</name>
        <dbReference type="ChEBI" id="CHEBI:83088"/>
    </cofactor>
    <text evidence="1">Binds 1 lipoyl cofactor covalently.</text>
</comment>
<comment type="subunit">
    <text evidence="1">The glycine cleavage system is composed of four proteins: P, T, L and H.</text>
</comment>
<comment type="similarity">
    <text evidence="1">Belongs to the GcvH family.</text>
</comment>
<keyword id="KW-0450">Lipoyl</keyword>
<feature type="chain" id="PRO_1000059185" description="Glycine cleavage system H protein">
    <location>
        <begin position="1"/>
        <end position="125"/>
    </location>
</feature>
<feature type="domain" description="Lipoyl-binding" evidence="2">
    <location>
        <begin position="19"/>
        <end position="101"/>
    </location>
</feature>
<feature type="modified residue" description="N6-lipoyllysine" evidence="1">
    <location>
        <position position="60"/>
    </location>
</feature>
<accession>Q5X0A5</accession>
<sequence length="125" mass="13845">MNDLKFTTTHEWLREDEEEVTVGITDHAQELLGDMVFVELPEIGDEVSAGQELGVVESVKAASDFYAPISGVVTAVNEAVGKNPALVNHDPYHEGWLVKLKPSHPDEIKSLLSDEQYQNEIAEEN</sequence>